<accession>Q6P1Z5</accession>
<accession>A2BI89</accession>
<organism>
    <name type="scientific">Mus musculus</name>
    <name type="common">Mouse</name>
    <dbReference type="NCBI Taxonomy" id="10090"/>
    <lineage>
        <taxon>Eukaryota</taxon>
        <taxon>Metazoa</taxon>
        <taxon>Chordata</taxon>
        <taxon>Craniata</taxon>
        <taxon>Vertebrata</taxon>
        <taxon>Euteleostomi</taxon>
        <taxon>Mammalia</taxon>
        <taxon>Eutheria</taxon>
        <taxon>Euarchontoglires</taxon>
        <taxon>Glires</taxon>
        <taxon>Rodentia</taxon>
        <taxon>Myomorpha</taxon>
        <taxon>Muroidea</taxon>
        <taxon>Muridae</taxon>
        <taxon>Murinae</taxon>
        <taxon>Mus</taxon>
        <taxon>Mus</taxon>
    </lineage>
</organism>
<evidence type="ECO:0000305" key="1"/>
<sequence>MVFCLENEMPHRLLGSAMVHFHASEVQQLLHNKFVVILGDSIQRAVYKDLVLLLQKDTLLTASQLKAKGELSFEQDQLVAGGQLGELHNGTQYREVRQFCSGSGHHLVRFYFLTRVYSEYLEDILEELSYGPAPDLVIINSCLWDLSRYGRCSMESYRENLERVFVRMDQVLPDSCLLVWNLAMPLGERVTGGFLLPELQPLAVSLRQDVVEGNFYSATLAGKHCFDVLDLHFHFRHAVRHRHRDGVHWDQHAHRHLSHLLLAHVADAWGVELPKHDRLPDPWIEDWSEMDHSFQGSHKQPPDFREKLALPLLPPFHLPPPMSFPYPLEPSPPPLFPPLPQDTPFFQGQPFPPYEFKYNAMEDFSMPGCGPGMNFVPGPLPPSVSGPVSHGQHRGPVVHRGKPRCVLNNPYHVPRIGGPCRHRLRHSDRLIHTYKQDRRGHAHSGTWPG</sequence>
<name>PED1A_MOUSE</name>
<comment type="similarity">
    <text evidence="1">Belongs to the PC-esterase family.</text>
</comment>
<protein>
    <recommendedName>
        <fullName>PC-esterase domain-containing protein 1A</fullName>
    </recommendedName>
    <alternativeName>
        <fullName>Protein FAM113A</fullName>
    </alternativeName>
</protein>
<gene>
    <name type="primary">Pced1a</name>
    <name type="synonym">Fam113a</name>
</gene>
<feature type="chain" id="PRO_0000079447" description="PC-esterase domain-containing protein 1A">
    <location>
        <begin position="1"/>
        <end position="449"/>
    </location>
</feature>
<feature type="sequence conflict" description="In Ref. 2; AAH64802." evidence="1" ref="2">
    <original>P</original>
    <variation>S</variation>
    <location>
        <position position="330"/>
    </location>
</feature>
<feature type="sequence conflict" description="In Ref. 2; AAH64802." evidence="1" ref="2">
    <original>P</original>
    <variation>S</variation>
    <location>
        <position position="338"/>
    </location>
</feature>
<dbReference type="EMBL" id="BX890605">
    <property type="status" value="NOT_ANNOTATED_CDS"/>
    <property type="molecule type" value="Genomic_DNA"/>
</dbReference>
<dbReference type="EMBL" id="BC064802">
    <property type="protein sequence ID" value="AAH64802.1"/>
    <property type="molecule type" value="mRNA"/>
</dbReference>
<dbReference type="CCDS" id="CCDS50711.1"/>
<dbReference type="RefSeq" id="NP_001108013.1">
    <property type="nucleotide sequence ID" value="NM_001114541.2"/>
</dbReference>
<dbReference type="RefSeq" id="NP_848877.2">
    <property type="nucleotide sequence ID" value="NM_178762.5"/>
</dbReference>
<dbReference type="RefSeq" id="XP_017174462.1">
    <property type="nucleotide sequence ID" value="XM_017318973.2"/>
</dbReference>
<dbReference type="FunCoup" id="Q6P1Z5">
    <property type="interactions" value="46"/>
</dbReference>
<dbReference type="STRING" id="10090.ENSMUSP00000087009"/>
<dbReference type="CarbonylDB" id="Q6P1Z5"/>
<dbReference type="PhosphoSitePlus" id="Q6P1Z5"/>
<dbReference type="PaxDb" id="10090-ENSMUSP00000087009"/>
<dbReference type="Antibodypedia" id="23331">
    <property type="antibodies" value="97 antibodies from 17 providers"/>
</dbReference>
<dbReference type="DNASU" id="319513"/>
<dbReference type="Ensembl" id="ENSMUST00000089581.11">
    <property type="protein sequence ID" value="ENSMUSP00000087009.5"/>
    <property type="gene ID" value="ENSMUSG00000037773.15"/>
</dbReference>
<dbReference type="Ensembl" id="ENSMUST00000110277.2">
    <property type="protein sequence ID" value="ENSMUSP00000105906.2"/>
    <property type="gene ID" value="ENSMUSG00000037773.15"/>
</dbReference>
<dbReference type="GeneID" id="319513"/>
<dbReference type="KEGG" id="mmu:319513"/>
<dbReference type="UCSC" id="uc008miu.2">
    <property type="organism name" value="mouse"/>
</dbReference>
<dbReference type="AGR" id="MGI:2442177"/>
<dbReference type="CTD" id="64773"/>
<dbReference type="MGI" id="MGI:2442177">
    <property type="gene designation" value="Pced1a"/>
</dbReference>
<dbReference type="VEuPathDB" id="HostDB:ENSMUSG00000037773"/>
<dbReference type="eggNOG" id="ENOG502QVBZ">
    <property type="taxonomic scope" value="Eukaryota"/>
</dbReference>
<dbReference type="GeneTree" id="ENSGT00390000002231"/>
<dbReference type="HOGENOM" id="CLU_053865_0_0_1"/>
<dbReference type="InParanoid" id="Q6P1Z5"/>
<dbReference type="OMA" id="RQPPDFG"/>
<dbReference type="OrthoDB" id="9975373at2759"/>
<dbReference type="PhylomeDB" id="Q6P1Z5"/>
<dbReference type="TreeFam" id="TF328972"/>
<dbReference type="BioGRID-ORCS" id="319513">
    <property type="hits" value="3 hits in 77 CRISPR screens"/>
</dbReference>
<dbReference type="ChiTaRS" id="Pced1a">
    <property type="organism name" value="mouse"/>
</dbReference>
<dbReference type="PRO" id="PR:Q6P1Z5"/>
<dbReference type="Proteomes" id="UP000000589">
    <property type="component" value="Chromosome 2"/>
</dbReference>
<dbReference type="RNAct" id="Q6P1Z5">
    <property type="molecule type" value="protein"/>
</dbReference>
<dbReference type="Bgee" id="ENSMUSG00000037773">
    <property type="expression patterns" value="Expressed in epiblast (generic) and 181 other cell types or tissues"/>
</dbReference>
<dbReference type="CDD" id="cd01842">
    <property type="entry name" value="SGNH_hydrolase_like_5"/>
    <property type="match status" value="1"/>
</dbReference>
<dbReference type="PANTHER" id="PTHR14469:SF3">
    <property type="entry name" value="PC-ESTERASE DOMAIN-CONTAINING PROTEIN 1A"/>
    <property type="match status" value="1"/>
</dbReference>
<dbReference type="PANTHER" id="PTHR14469">
    <property type="entry name" value="SARCOMA ANTIGEN NY-SAR-23"/>
    <property type="match status" value="1"/>
</dbReference>
<dbReference type="SUPFAM" id="SSF52266">
    <property type="entry name" value="SGNH hydrolase"/>
    <property type="match status" value="1"/>
</dbReference>
<keyword id="KW-1185">Reference proteome</keyword>
<reference key="1">
    <citation type="journal article" date="2009" name="PLoS Biol.">
        <title>Lineage-specific biology revealed by a finished genome assembly of the mouse.</title>
        <authorList>
            <person name="Church D.M."/>
            <person name="Goodstadt L."/>
            <person name="Hillier L.W."/>
            <person name="Zody M.C."/>
            <person name="Goldstein S."/>
            <person name="She X."/>
            <person name="Bult C.J."/>
            <person name="Agarwala R."/>
            <person name="Cherry J.L."/>
            <person name="DiCuccio M."/>
            <person name="Hlavina W."/>
            <person name="Kapustin Y."/>
            <person name="Meric P."/>
            <person name="Maglott D."/>
            <person name="Birtle Z."/>
            <person name="Marques A.C."/>
            <person name="Graves T."/>
            <person name="Zhou S."/>
            <person name="Teague B."/>
            <person name="Potamousis K."/>
            <person name="Churas C."/>
            <person name="Place M."/>
            <person name="Herschleb J."/>
            <person name="Runnheim R."/>
            <person name="Forrest D."/>
            <person name="Amos-Landgraf J."/>
            <person name="Schwartz D.C."/>
            <person name="Cheng Z."/>
            <person name="Lindblad-Toh K."/>
            <person name="Eichler E.E."/>
            <person name="Ponting C.P."/>
        </authorList>
    </citation>
    <scope>NUCLEOTIDE SEQUENCE [LARGE SCALE GENOMIC DNA]</scope>
    <source>
        <strain>C57BL/6J</strain>
    </source>
</reference>
<reference key="2">
    <citation type="journal article" date="2004" name="Genome Res.">
        <title>The status, quality, and expansion of the NIH full-length cDNA project: the Mammalian Gene Collection (MGC).</title>
        <authorList>
            <consortium name="The MGC Project Team"/>
        </authorList>
    </citation>
    <scope>NUCLEOTIDE SEQUENCE [LARGE SCALE MRNA]</scope>
    <source>
        <strain>129/Sv</strain>
        <tissue>Embryonic stem cell</tissue>
    </source>
</reference>
<proteinExistence type="evidence at transcript level"/>